<feature type="chain" id="PRO_0000109499" description="Signal peptidase I S">
    <location>
        <begin position="1"/>
        <end position="184"/>
    </location>
</feature>
<feature type="topological domain" description="Cytoplasmic" evidence="1">
    <location>
        <begin position="1"/>
        <end position="18"/>
    </location>
</feature>
<feature type="transmembrane region" description="Helical" evidence="1">
    <location>
        <begin position="19"/>
        <end position="39"/>
    </location>
</feature>
<feature type="topological domain" description="Extracellular" evidence="1">
    <location>
        <begin position="40"/>
        <end position="184"/>
    </location>
</feature>
<feature type="active site">
    <location>
        <position position="43"/>
    </location>
</feature>
<feature type="active site">
    <location>
        <position position="83"/>
    </location>
</feature>
<feature type="mutagenesis site" description="No effect." evidence="3">
    <original>D</original>
    <variation>S</variation>
    <location>
        <position position="42"/>
    </location>
</feature>
<feature type="mutagenesis site" description="Loss of activity." evidence="3">
    <original>S</original>
    <variation>A</variation>
    <variation>V</variation>
    <location>
        <position position="43"/>
    </location>
</feature>
<feature type="mutagenesis site" description="Reduced activity." evidence="3">
    <original>S</original>
    <variation>C</variation>
    <variation>T</variation>
    <location>
        <position position="43"/>
    </location>
</feature>
<feature type="mutagenesis site" description="Increased activity." evidence="3">
    <original>M</original>
    <variation>A</variation>
    <location>
        <position position="44"/>
    </location>
</feature>
<feature type="mutagenesis site" description="Slightly reduced activity." evidence="3">
    <original>P</original>
    <variation>A</variation>
    <location>
        <position position="46"/>
    </location>
</feature>
<feature type="mutagenesis site" description="No effect." evidence="3">
    <original>T</original>
    <variation>A</variation>
    <location>
        <position position="47"/>
    </location>
</feature>
<feature type="mutagenesis site" description="Reduced activity." evidence="3">
    <original>L</original>
    <variation>A</variation>
    <location>
        <position position="48"/>
    </location>
</feature>
<feature type="mutagenesis site" description="Slightly reduced activity." evidence="3">
    <original>G</original>
    <variation>A</variation>
    <location>
        <position position="69"/>
    </location>
</feature>
<feature type="mutagenesis site" description="Slightly reduced activity." evidence="3">
    <original>D</original>
    <variation>A</variation>
    <location>
        <position position="70"/>
    </location>
</feature>
<feature type="mutagenesis site" description="Slightly reduced activity." evidence="3">
    <original>I</original>
    <variation>A</variation>
    <location>
        <position position="71"/>
    </location>
</feature>
<feature type="mutagenesis site" description="No effect." evidence="3">
    <original>V</original>
    <variation>A</variation>
    <location>
        <position position="72"/>
    </location>
</feature>
<feature type="mutagenesis site" description="Reduced activity." evidence="3">
    <original>L</original>
    <variation>A</variation>
    <location>
        <position position="74"/>
    </location>
</feature>
<feature type="mutagenesis site" description="No effect." evidence="3">
    <original>V</original>
    <variation>A</variation>
    <location>
        <position position="79"/>
    </location>
</feature>
<feature type="mutagenesis site" description="Reduced activity." evidence="3">
    <original>Y</original>
    <variation>A</variation>
    <location>
        <position position="81"/>
    </location>
</feature>
<feature type="mutagenesis site" description="No effect." evidence="3">
    <original>Y</original>
    <variation>F</variation>
    <location>
        <position position="81"/>
    </location>
</feature>
<feature type="mutagenesis site" description="Loss of activity." evidence="3">
    <original>K</original>
    <variation>A</variation>
    <variation>H</variation>
    <variation>R</variation>
    <location>
        <position position="83"/>
    </location>
</feature>
<feature type="mutagenesis site" description="Loss of activity." evidence="3">
    <original>R</original>
    <variation>A</variation>
    <location>
        <position position="84"/>
    </location>
</feature>
<feature type="mutagenesis site" description="Strongly reduced activity." evidence="3">
    <original>R</original>
    <variation>H</variation>
    <location>
        <position position="84"/>
    </location>
</feature>
<feature type="mutagenesis site" description="No effect." evidence="3">
    <original>R</original>
    <variation>K</variation>
    <location>
        <position position="84"/>
    </location>
</feature>
<feature type="mutagenesis site" description="Slightly reduced activity." evidence="3">
    <original>I</original>
    <variation>A</variation>
    <location>
        <position position="86"/>
    </location>
</feature>
<feature type="mutagenesis site" description="No effect." evidence="3">
    <original>G</original>
    <variation>A</variation>
    <location>
        <position position="87"/>
    </location>
</feature>
<feature type="mutagenesis site" description="Reduced activity." evidence="3">
    <original>L</original>
    <variation>A</variation>
    <location>
        <position position="88"/>
    </location>
</feature>
<feature type="mutagenesis site" description="No effect." evidence="3">
    <original>P</original>
    <variation>A</variation>
    <location>
        <position position="89"/>
    </location>
</feature>
<feature type="mutagenesis site" description="No effect." evidence="3">
    <original>G</original>
    <variation>A</variation>
    <location>
        <position position="90"/>
    </location>
</feature>
<feature type="mutagenesis site" description="No effect." evidence="3">
    <original>D</original>
    <variation>A</variation>
    <variation>E</variation>
    <variation>N</variation>
    <location>
        <position position="91"/>
    </location>
</feature>
<feature type="mutagenesis site" description="No effect." evidence="3">
    <original>Y</original>
    <variation>A</variation>
    <location>
        <position position="141"/>
    </location>
</feature>
<feature type="mutagenesis site" description="Strongly reduced activity." evidence="3">
    <original>G</original>
    <variation>A</variation>
    <location>
        <position position="145"/>
    </location>
</feature>
<feature type="mutagenesis site" description="Strongly reduced activity." evidence="3">
    <original>D</original>
    <variation>A</variation>
    <variation>N</variation>
    <location>
        <position position="146"/>
    </location>
</feature>
<feature type="mutagenesis site" description="No effect." evidence="3">
    <original>D</original>
    <variation>E</variation>
    <location>
        <position position="146"/>
    </location>
</feature>
<feature type="mutagenesis site" description="Reduced activity." evidence="3">
    <original>N</original>
    <variation>A</variation>
    <location>
        <position position="147"/>
    </location>
</feature>
<feature type="mutagenesis site" description="No effect." evidence="3">
    <original>N</original>
    <variation>A</variation>
    <location>
        <position position="150"/>
    </location>
</feature>
<feature type="mutagenesis site" description="Reduced activity." evidence="3">
    <original>S</original>
    <variation>A</variation>
    <location>
        <position position="151"/>
    </location>
</feature>
<feature type="mutagenesis site" description="Strongly reduced activity." evidence="3">
    <original>D</original>
    <variation>A</variation>
    <location>
        <position position="153"/>
    </location>
</feature>
<feature type="mutagenesis site" description="Loss of activity." evidence="3">
    <original>D</original>
    <variation>E</variation>
    <variation>N</variation>
    <location>
        <position position="153"/>
    </location>
</feature>
<feature type="mutagenesis site" description="Slightly reduced activity." evidence="3">
    <original>S</original>
    <variation>A</variation>
    <location>
        <position position="154"/>
    </location>
</feature>
<feature type="mutagenesis site" description="Reduced activity." evidence="3">
    <original>R</original>
    <variation>A</variation>
    <location>
        <position position="155"/>
    </location>
</feature>
<protein>
    <recommendedName>
        <fullName>Signal peptidase I S</fullName>
        <shortName>SPase I</shortName>
        <ecNumber>3.4.21.89</ecNumber>
    </recommendedName>
    <alternativeName>
        <fullName>Leader peptidase I</fullName>
    </alternativeName>
</protein>
<proteinExistence type="evidence at protein level"/>
<comment type="function">
    <text evidence="2">Not essential for cell viability, but required for efficient secretion of many proteins.</text>
</comment>
<comment type="catalytic activity">
    <reaction>
        <text>Cleavage of hydrophobic, N-terminal signal or leader sequences from secreted and periplasmic proteins.</text>
        <dbReference type="EC" id="3.4.21.89"/>
    </reaction>
</comment>
<comment type="subcellular location">
    <subcellularLocation>
        <location>Cell membrane</location>
        <topology>Single-pass type II membrane protein</topology>
    </subcellularLocation>
</comment>
<comment type="induction">
    <text>Expressed at the postexponential growth phase; regulated by the DegS-DegU system.</text>
</comment>
<comment type="miscellaneous">
    <text>B.subtilis contains five chromosomal type I signal peptidases: SipS, SipT, SipU, SipV and SipW. They have different, but overlapping, substrate specificities and have different transcription patterns.</text>
</comment>
<comment type="similarity">
    <text evidence="4">Belongs to the peptidase S26 family.</text>
</comment>
<keyword id="KW-1003">Cell membrane</keyword>
<keyword id="KW-0378">Hydrolase</keyword>
<keyword id="KW-0472">Membrane</keyword>
<keyword id="KW-0645">Protease</keyword>
<keyword id="KW-1185">Reference proteome</keyword>
<keyword id="KW-0812">Transmembrane</keyword>
<keyword id="KW-1133">Transmembrane helix</keyword>
<gene>
    <name type="primary">sipS</name>
    <name type="ordered locus">BSU23310</name>
</gene>
<dbReference type="EC" id="3.4.21.89"/>
<dbReference type="EMBL" id="Z11847">
    <property type="protein sequence ID" value="CAA77871.1"/>
    <property type="molecule type" value="Genomic_DNA"/>
</dbReference>
<dbReference type="EMBL" id="L09228">
    <property type="protein sequence ID" value="AAA67478.1"/>
    <property type="molecule type" value="Genomic_DNA"/>
</dbReference>
<dbReference type="EMBL" id="AL009126">
    <property type="protein sequence ID" value="CAB14263.1"/>
    <property type="molecule type" value="Genomic_DNA"/>
</dbReference>
<dbReference type="PIR" id="S23381">
    <property type="entry name" value="S23381"/>
</dbReference>
<dbReference type="RefSeq" id="NP_390212.1">
    <property type="nucleotide sequence ID" value="NC_000964.3"/>
</dbReference>
<dbReference type="RefSeq" id="WP_003246166.1">
    <property type="nucleotide sequence ID" value="NZ_OZ025638.1"/>
</dbReference>
<dbReference type="SMR" id="P28628"/>
<dbReference type="FunCoup" id="P28628">
    <property type="interactions" value="509"/>
</dbReference>
<dbReference type="STRING" id="224308.BSU23310"/>
<dbReference type="MEROPS" id="S26.003"/>
<dbReference type="PaxDb" id="224308-BSU23310"/>
<dbReference type="DNASU" id="938944"/>
<dbReference type="EnsemblBacteria" id="CAB14263">
    <property type="protein sequence ID" value="CAB14263"/>
    <property type="gene ID" value="BSU_23310"/>
</dbReference>
<dbReference type="GeneID" id="938944"/>
<dbReference type="KEGG" id="bsu:BSU23310"/>
<dbReference type="PATRIC" id="fig|224308.179.peg.2537"/>
<dbReference type="eggNOG" id="COG0681">
    <property type="taxonomic scope" value="Bacteria"/>
</dbReference>
<dbReference type="InParanoid" id="P28628"/>
<dbReference type="OrthoDB" id="9802919at2"/>
<dbReference type="PhylomeDB" id="P28628"/>
<dbReference type="BioCyc" id="BSUB:BSU23310-MONOMER"/>
<dbReference type="BRENDA" id="3.4.21.89">
    <property type="organism ID" value="658"/>
</dbReference>
<dbReference type="Proteomes" id="UP000001570">
    <property type="component" value="Chromosome"/>
</dbReference>
<dbReference type="GO" id="GO:0005886">
    <property type="term" value="C:plasma membrane"/>
    <property type="evidence" value="ECO:0007669"/>
    <property type="project" value="UniProtKB-SubCell"/>
</dbReference>
<dbReference type="GO" id="GO:0004252">
    <property type="term" value="F:serine-type endopeptidase activity"/>
    <property type="evidence" value="ECO:0000318"/>
    <property type="project" value="GO_Central"/>
</dbReference>
<dbReference type="GO" id="GO:0006465">
    <property type="term" value="P:signal peptide processing"/>
    <property type="evidence" value="ECO:0000318"/>
    <property type="project" value="GO_Central"/>
</dbReference>
<dbReference type="CDD" id="cd06530">
    <property type="entry name" value="S26_SPase_I"/>
    <property type="match status" value="1"/>
</dbReference>
<dbReference type="FunFam" id="2.10.109.10:FF:000008">
    <property type="entry name" value="Signal peptidase I"/>
    <property type="match status" value="1"/>
</dbReference>
<dbReference type="Gene3D" id="2.10.109.10">
    <property type="entry name" value="Umud Fragment, subunit A"/>
    <property type="match status" value="1"/>
</dbReference>
<dbReference type="InterPro" id="IPR036286">
    <property type="entry name" value="LexA/Signal_pep-like_sf"/>
</dbReference>
<dbReference type="InterPro" id="IPR000223">
    <property type="entry name" value="Pept_S26A_signal_pept_1"/>
</dbReference>
<dbReference type="InterPro" id="IPR019758">
    <property type="entry name" value="Pept_S26A_signal_pept_1_CS"/>
</dbReference>
<dbReference type="InterPro" id="IPR019757">
    <property type="entry name" value="Pept_S26A_signal_pept_1_Lys-AS"/>
</dbReference>
<dbReference type="InterPro" id="IPR019756">
    <property type="entry name" value="Pept_S26A_signal_pept_1_Ser-AS"/>
</dbReference>
<dbReference type="InterPro" id="IPR019533">
    <property type="entry name" value="Peptidase_S26"/>
</dbReference>
<dbReference type="NCBIfam" id="TIGR02227">
    <property type="entry name" value="sigpep_I_bact"/>
    <property type="match status" value="1"/>
</dbReference>
<dbReference type="PANTHER" id="PTHR43390:SF1">
    <property type="entry name" value="CHLOROPLAST PROCESSING PEPTIDASE"/>
    <property type="match status" value="1"/>
</dbReference>
<dbReference type="PANTHER" id="PTHR43390">
    <property type="entry name" value="SIGNAL PEPTIDASE I"/>
    <property type="match status" value="1"/>
</dbReference>
<dbReference type="Pfam" id="PF10502">
    <property type="entry name" value="Peptidase_S26"/>
    <property type="match status" value="1"/>
</dbReference>
<dbReference type="PRINTS" id="PR00727">
    <property type="entry name" value="LEADERPTASE"/>
</dbReference>
<dbReference type="SUPFAM" id="SSF51306">
    <property type="entry name" value="LexA/Signal peptidase"/>
    <property type="match status" value="1"/>
</dbReference>
<dbReference type="PROSITE" id="PS00501">
    <property type="entry name" value="SPASE_I_1"/>
    <property type="match status" value="1"/>
</dbReference>
<dbReference type="PROSITE" id="PS00760">
    <property type="entry name" value="SPASE_I_2"/>
    <property type="match status" value="1"/>
</dbReference>
<dbReference type="PROSITE" id="PS00761">
    <property type="entry name" value="SPASE_I_3"/>
    <property type="match status" value="1"/>
</dbReference>
<sequence>MKSENVSKKKSILEWAKAIVIAVVLALLIRNFIFAPYVVDGDSMYPTLHNRERVFVNMTVKYIGEFDRGDIVVLNGDDVHYVKRIIGLPGDTVEMKNDQLYINGKKVDEPYLAANKKRAKQDGFDHLTDDFGPVKVPDNKYFVMGDNRRNSMDSRNGLGLFTKKQIAGTSKFVFYPFNEMRKTN</sequence>
<organism>
    <name type="scientific">Bacillus subtilis (strain 168)</name>
    <dbReference type="NCBI Taxonomy" id="224308"/>
    <lineage>
        <taxon>Bacteria</taxon>
        <taxon>Bacillati</taxon>
        <taxon>Bacillota</taxon>
        <taxon>Bacilli</taxon>
        <taxon>Bacillales</taxon>
        <taxon>Bacillaceae</taxon>
        <taxon>Bacillus</taxon>
    </lineage>
</organism>
<name>LEPS_BACSU</name>
<evidence type="ECO:0000255" key="1"/>
<evidence type="ECO:0000269" key="2">
    <source>
    </source>
</evidence>
<evidence type="ECO:0000269" key="3">
    <source>
    </source>
</evidence>
<evidence type="ECO:0000305" key="4"/>
<accession>P28628</accession>
<reference key="1">
    <citation type="journal article" date="1992" name="EMBO J.">
        <title>Signal peptidase I of Bacillus subtilis: patterns of conserved amino acids in prokaryotic and eukaryotic type I signal peptidases.</title>
        <authorList>
            <person name="van Dijl J.M."/>
            <person name="de Jong A."/>
            <person name="Vehmaanpera J."/>
            <person name="Venema G."/>
            <person name="Bron S."/>
        </authorList>
    </citation>
    <scope>NUCLEOTIDE SEQUENCE [GENOMIC DNA]</scope>
    <source>
        <strain>168 / 6GM(AMY)</strain>
    </source>
</reference>
<reference key="2">
    <citation type="journal article" date="1993" name="Mol. Microbiol.">
        <title>The organization of the Bacillus subtilis 168 chromosome region between the spoVA and serA genetic loci, based on sequence data.</title>
        <authorList>
            <person name="Sorokin A.V."/>
            <person name="Zumstein E."/>
            <person name="Azevedo V."/>
            <person name="Ehrlich S.D."/>
            <person name="Serror P."/>
        </authorList>
    </citation>
    <scope>NUCLEOTIDE SEQUENCE [GENOMIC DNA]</scope>
    <source>
        <strain>168 / Marburg / ATCC 6051 / DSM 10 / JCM 1465 / NBRC 13719 / NCIMB 3610 / NRRL NRS-744 / VKM B-501</strain>
    </source>
</reference>
<reference key="3">
    <citation type="journal article" date="1995" name="J. Biol. Chem.">
        <title>Identification of the potential active site of the signal peptidase SipS of Bacillus subtilis. Structural and functional similarities with LexA-like proteases.</title>
        <authorList>
            <person name="van Dijl J.M."/>
            <person name="de Jong A."/>
            <person name="Venema G."/>
            <person name="Bron S."/>
        </authorList>
    </citation>
    <scope>NUCLEOTIDE SEQUENCE [GENOMIC DNA]</scope>
    <scope>MUTAGENESIS</scope>
</reference>
<reference key="4">
    <citation type="journal article" date="1997" name="Nature">
        <title>The complete genome sequence of the Gram-positive bacterium Bacillus subtilis.</title>
        <authorList>
            <person name="Kunst F."/>
            <person name="Ogasawara N."/>
            <person name="Moszer I."/>
            <person name="Albertini A.M."/>
            <person name="Alloni G."/>
            <person name="Azevedo V."/>
            <person name="Bertero M.G."/>
            <person name="Bessieres P."/>
            <person name="Bolotin A."/>
            <person name="Borchert S."/>
            <person name="Borriss R."/>
            <person name="Boursier L."/>
            <person name="Brans A."/>
            <person name="Braun M."/>
            <person name="Brignell S.C."/>
            <person name="Bron S."/>
            <person name="Brouillet S."/>
            <person name="Bruschi C.V."/>
            <person name="Caldwell B."/>
            <person name="Capuano V."/>
            <person name="Carter N.M."/>
            <person name="Choi S.-K."/>
            <person name="Codani J.-J."/>
            <person name="Connerton I.F."/>
            <person name="Cummings N.J."/>
            <person name="Daniel R.A."/>
            <person name="Denizot F."/>
            <person name="Devine K.M."/>
            <person name="Duesterhoeft A."/>
            <person name="Ehrlich S.D."/>
            <person name="Emmerson P.T."/>
            <person name="Entian K.-D."/>
            <person name="Errington J."/>
            <person name="Fabret C."/>
            <person name="Ferrari E."/>
            <person name="Foulger D."/>
            <person name="Fritz C."/>
            <person name="Fujita M."/>
            <person name="Fujita Y."/>
            <person name="Fuma S."/>
            <person name="Galizzi A."/>
            <person name="Galleron N."/>
            <person name="Ghim S.-Y."/>
            <person name="Glaser P."/>
            <person name="Goffeau A."/>
            <person name="Golightly E.J."/>
            <person name="Grandi G."/>
            <person name="Guiseppi G."/>
            <person name="Guy B.J."/>
            <person name="Haga K."/>
            <person name="Haiech J."/>
            <person name="Harwood C.R."/>
            <person name="Henaut A."/>
            <person name="Hilbert H."/>
            <person name="Holsappel S."/>
            <person name="Hosono S."/>
            <person name="Hullo M.-F."/>
            <person name="Itaya M."/>
            <person name="Jones L.-M."/>
            <person name="Joris B."/>
            <person name="Karamata D."/>
            <person name="Kasahara Y."/>
            <person name="Klaerr-Blanchard M."/>
            <person name="Klein C."/>
            <person name="Kobayashi Y."/>
            <person name="Koetter P."/>
            <person name="Koningstein G."/>
            <person name="Krogh S."/>
            <person name="Kumano M."/>
            <person name="Kurita K."/>
            <person name="Lapidus A."/>
            <person name="Lardinois S."/>
            <person name="Lauber J."/>
            <person name="Lazarevic V."/>
            <person name="Lee S.-M."/>
            <person name="Levine A."/>
            <person name="Liu H."/>
            <person name="Masuda S."/>
            <person name="Mauel C."/>
            <person name="Medigue C."/>
            <person name="Medina N."/>
            <person name="Mellado R.P."/>
            <person name="Mizuno M."/>
            <person name="Moestl D."/>
            <person name="Nakai S."/>
            <person name="Noback M."/>
            <person name="Noone D."/>
            <person name="O'Reilly M."/>
            <person name="Ogawa K."/>
            <person name="Ogiwara A."/>
            <person name="Oudega B."/>
            <person name="Park S.-H."/>
            <person name="Parro V."/>
            <person name="Pohl T.M."/>
            <person name="Portetelle D."/>
            <person name="Porwollik S."/>
            <person name="Prescott A.M."/>
            <person name="Presecan E."/>
            <person name="Pujic P."/>
            <person name="Purnelle B."/>
            <person name="Rapoport G."/>
            <person name="Rey M."/>
            <person name="Reynolds S."/>
            <person name="Rieger M."/>
            <person name="Rivolta C."/>
            <person name="Rocha E."/>
            <person name="Roche B."/>
            <person name="Rose M."/>
            <person name="Sadaie Y."/>
            <person name="Sato T."/>
            <person name="Scanlan E."/>
            <person name="Schleich S."/>
            <person name="Schroeter R."/>
            <person name="Scoffone F."/>
            <person name="Sekiguchi J."/>
            <person name="Sekowska A."/>
            <person name="Seror S.J."/>
            <person name="Serror P."/>
            <person name="Shin B.-S."/>
            <person name="Soldo B."/>
            <person name="Sorokin A."/>
            <person name="Tacconi E."/>
            <person name="Takagi T."/>
            <person name="Takahashi H."/>
            <person name="Takemaru K."/>
            <person name="Takeuchi M."/>
            <person name="Tamakoshi A."/>
            <person name="Tanaka T."/>
            <person name="Terpstra P."/>
            <person name="Tognoni A."/>
            <person name="Tosato V."/>
            <person name="Uchiyama S."/>
            <person name="Vandenbol M."/>
            <person name="Vannier F."/>
            <person name="Vassarotti A."/>
            <person name="Viari A."/>
            <person name="Wambutt R."/>
            <person name="Wedler E."/>
            <person name="Wedler H."/>
            <person name="Weitzenegger T."/>
            <person name="Winters P."/>
            <person name="Wipat A."/>
            <person name="Yamamoto H."/>
            <person name="Yamane K."/>
            <person name="Yasumoto K."/>
            <person name="Yata K."/>
            <person name="Yoshida K."/>
            <person name="Yoshikawa H.-F."/>
            <person name="Zumstein E."/>
            <person name="Yoshikawa H."/>
            <person name="Danchin A."/>
        </authorList>
    </citation>
    <scope>NUCLEOTIDE SEQUENCE [LARGE SCALE GENOMIC DNA]</scope>
    <source>
        <strain>168</strain>
    </source>
</reference>
<reference key="5">
    <citation type="journal article" date="1996" name="Mol. Microbiol.">
        <title>Bacillus subtilis can modulate its capacity and specificity for protein secretion through temporally controlled expression of the sipS gene for signal peptidase I.</title>
        <authorList>
            <person name="Bolhuis A."/>
            <person name="Sorokin A."/>
            <person name="Azevedo V."/>
            <person name="Ehrlich S.D."/>
            <person name="Braun P.G."/>
            <person name="de Jong A."/>
            <person name="Venema G."/>
            <person name="Bron S."/>
            <person name="van Dijl J.M."/>
        </authorList>
    </citation>
    <scope>CHARACTERIZATION</scope>
</reference>
<reference key="6">
    <citation type="journal article" date="1998" name="Genes Dev.">
        <title>Functional analysis of the secretory precursor processing machinery of Bacillus subtilis: identification of a eubacterial homolog of archaeal and eukaryotic signal peptidases.</title>
        <authorList>
            <person name="Tjalsma H."/>
            <person name="Bolhuis A."/>
            <person name="van Roosmalen M.L."/>
            <person name="Wiegert T."/>
            <person name="Schumann W."/>
            <person name="Broekhuizen C.P."/>
            <person name="Quax W.J."/>
            <person name="Venema G."/>
            <person name="Bron S."/>
            <person name="van Dijl J.M."/>
        </authorList>
    </citation>
    <scope>CHARACTERIZATION</scope>
</reference>
<reference key="7">
    <citation type="journal article" date="2000" name="J. Biol. Chem.">
        <title>The role of the membrane-spanning domain of type I signal peptidases in substrate cleavage site selection.</title>
        <authorList>
            <person name="Carlos J.L."/>
            <person name="Paetzel M."/>
            <person name="Brubaker G."/>
            <person name="Karla A."/>
            <person name="Ashwell C.M."/>
            <person name="Lively M.O."/>
            <person name="Cao G."/>
            <person name="Bullinger P."/>
            <person name="Dalbey R.E."/>
        </authorList>
    </citation>
    <scope>FUNCTION OF TRANSMEMBRANE DOMAIN</scope>
</reference>
<reference key="8">
    <citation type="journal article" date="1998" name="J. Biotechnol.">
        <title>Protein secretion and possible roles for multiple signal peptidases for precursor processing in bacilli.</title>
        <authorList>
            <person name="Bron S."/>
            <person name="Bolhuis A."/>
            <person name="Tjalsma H."/>
            <person name="Holsappel S."/>
            <person name="Venema G."/>
            <person name="van Dijl J.M."/>
        </authorList>
    </citation>
    <scope>REVIEW</scope>
</reference>